<reference key="1">
    <citation type="journal article" date="1999" name="Genetics">
        <title>Divergence of the hyperthermophilic archaea Pyrococcus furiosus and P. horikoshii inferred from complete genomic sequences.</title>
        <authorList>
            <person name="Maeder D.L."/>
            <person name="Weiss R.B."/>
            <person name="Dunn D.M."/>
            <person name="Cherry J.L."/>
            <person name="Gonzalez J.M."/>
            <person name="DiRuggiero J."/>
            <person name="Robb F.T."/>
        </authorList>
    </citation>
    <scope>NUCLEOTIDE SEQUENCE [LARGE SCALE GENOMIC DNA]</scope>
    <source>
        <strain>ATCC 43587 / DSM 3638 / JCM 8422 / Vc1</strain>
    </source>
</reference>
<reference key="2">
    <citation type="journal article" date="2006" name="FEBS J.">
        <title>Production and characterization of a thermostable L-threonine dehydrogenase from the hyperthermophilic archaeon Pyrococcus furiosus.</title>
        <authorList>
            <person name="Machielsen R."/>
            <person name="van der Oost J."/>
        </authorList>
    </citation>
    <scope>FUNCTION</scope>
    <scope>CATALYTIC ACTIVITY</scope>
    <scope>SUBSTRATE SPECIFICITY</scope>
    <scope>COFACTOR</scope>
    <scope>BIOPHYSICOCHEMICAL PROPERTIES</scope>
    <scope>SUBUNIT</scope>
</reference>
<comment type="function">
    <text evidence="2">Catalyzes the NAD(+)-dependent oxidation of L-threonine to 2-amino-3-ketobutyrate. To a lesser extent, also catalyzes the oxidation of L-serine, D-threonine, butan-2,3-diol, butan-1,2-diol, and propan-1,2-diol and cannot oxidize other L-amino acids. Cannot utilize NADP(H) instead of NAD(H).</text>
</comment>
<comment type="catalytic activity">
    <reaction evidence="1 2">
        <text>L-threonine + NAD(+) = (2S)-2-amino-3-oxobutanoate + NADH + H(+)</text>
        <dbReference type="Rhea" id="RHEA:13161"/>
        <dbReference type="ChEBI" id="CHEBI:15378"/>
        <dbReference type="ChEBI" id="CHEBI:57540"/>
        <dbReference type="ChEBI" id="CHEBI:57926"/>
        <dbReference type="ChEBI" id="CHEBI:57945"/>
        <dbReference type="ChEBI" id="CHEBI:78948"/>
        <dbReference type="EC" id="1.1.1.103"/>
    </reaction>
</comment>
<comment type="cofactor">
    <cofactor evidence="1 4">
        <name>Zn(2+)</name>
        <dbReference type="ChEBI" id="CHEBI:29105"/>
    </cofactor>
    <text evidence="1">Binds 2 Zn(2+) ions per subunit.</text>
</comment>
<comment type="biophysicochemical properties">
    <kinetics>
        <KM evidence="2">1.5 mM for L-threonine (at 70 degrees Celsius)</KM>
        <KM evidence="2">0.055 mM for NAD(+) (at 70 degrees Celsius)</KM>
        <KM evidence="2">25.9 mM for butan-2,3-diol (at 70 degrees Celsius)</KM>
        <Vmax evidence="2">10.3 umol/min/mg enzyme for the NAD(+) oxidation of L-threonine</Vmax>
        <Vmax evidence="2">9.7 umol/min/mg enzyme for the NAD(+) oxidation of butan-2,3-diol</Vmax>
    </kinetics>
    <phDependence>
        <text evidence="2">Optimum pH is 10.0.</text>
    </phDependence>
    <temperatureDependence>
        <text evidence="2">The catalytic activity of the enzyme increases up to 100 degrees Celsius. Thermostable, has a half-life of 11 minutes at 100 degrees Celsius, 36 minutes at 90 degrees Celsius and 100 minutes at 80 degrees Celsius.</text>
    </temperatureDependence>
</comment>
<comment type="pathway">
    <text evidence="1 4">Amino-acid degradation; L-threonine degradation via oxydo-reductase pathway; glycine from L-threonine: step 1/2.</text>
</comment>
<comment type="subunit">
    <text evidence="2">Homotetramer.</text>
</comment>
<comment type="subcellular location">
    <subcellularLocation>
        <location evidence="1">Cytoplasm</location>
    </subcellularLocation>
</comment>
<comment type="similarity">
    <text evidence="1">Belongs to the zinc-containing alcohol dehydrogenase family.</text>
</comment>
<accession>Q8U259</accession>
<protein>
    <recommendedName>
        <fullName evidence="1">L-threonine 3-dehydrogenase</fullName>
        <shortName evidence="1 3">TDH</shortName>
        <ecNumber evidence="1 2">1.1.1.103</ecNumber>
    </recommendedName>
    <alternativeName>
        <fullName evidence="3">L-threonine dehydrogenase</fullName>
    </alternativeName>
</protein>
<evidence type="ECO:0000255" key="1">
    <source>
        <dbReference type="HAMAP-Rule" id="MF_00627"/>
    </source>
</evidence>
<evidence type="ECO:0000269" key="2">
    <source>
    </source>
</evidence>
<evidence type="ECO:0000303" key="3">
    <source>
    </source>
</evidence>
<evidence type="ECO:0000305" key="4">
    <source>
    </source>
</evidence>
<dbReference type="EC" id="1.1.1.103" evidence="1 2"/>
<dbReference type="EMBL" id="AE009950">
    <property type="protein sequence ID" value="AAL81115.1"/>
    <property type="molecule type" value="Genomic_DNA"/>
</dbReference>
<dbReference type="RefSeq" id="WP_011012128.1">
    <property type="nucleotide sequence ID" value="NZ_CP023154.1"/>
</dbReference>
<dbReference type="SMR" id="Q8U259"/>
<dbReference type="STRING" id="186497.PF0991"/>
<dbReference type="PaxDb" id="186497-PF0991"/>
<dbReference type="GeneID" id="41712804"/>
<dbReference type="KEGG" id="pfu:PF0991"/>
<dbReference type="PATRIC" id="fig|186497.12.peg.1050"/>
<dbReference type="eggNOG" id="arCOG01459">
    <property type="taxonomic scope" value="Archaea"/>
</dbReference>
<dbReference type="HOGENOM" id="CLU_026673_11_0_2"/>
<dbReference type="OrthoDB" id="73567at2157"/>
<dbReference type="PhylomeDB" id="Q8U259"/>
<dbReference type="BRENDA" id="1.1.1.1">
    <property type="organism ID" value="5243"/>
</dbReference>
<dbReference type="UniPathway" id="UPA00046">
    <property type="reaction ID" value="UER00505"/>
</dbReference>
<dbReference type="Proteomes" id="UP000001013">
    <property type="component" value="Chromosome"/>
</dbReference>
<dbReference type="GO" id="GO:0005737">
    <property type="term" value="C:cytoplasm"/>
    <property type="evidence" value="ECO:0007669"/>
    <property type="project" value="UniProtKB-SubCell"/>
</dbReference>
<dbReference type="GO" id="GO:0016597">
    <property type="term" value="F:amino acid binding"/>
    <property type="evidence" value="ECO:0000314"/>
    <property type="project" value="UniProtKB"/>
</dbReference>
<dbReference type="GO" id="GO:0008743">
    <property type="term" value="F:L-threonine 3-dehydrogenase activity"/>
    <property type="evidence" value="ECO:0000314"/>
    <property type="project" value="UniProtKB"/>
</dbReference>
<dbReference type="GO" id="GO:0070403">
    <property type="term" value="F:NAD+ binding"/>
    <property type="evidence" value="ECO:0000314"/>
    <property type="project" value="UniProtKB"/>
</dbReference>
<dbReference type="GO" id="GO:0008270">
    <property type="term" value="F:zinc ion binding"/>
    <property type="evidence" value="ECO:0007669"/>
    <property type="project" value="UniProtKB-UniRule"/>
</dbReference>
<dbReference type="GO" id="GO:0019518">
    <property type="term" value="P:L-threonine catabolic process to glycine"/>
    <property type="evidence" value="ECO:0007669"/>
    <property type="project" value="UniProtKB-UniPathway"/>
</dbReference>
<dbReference type="GO" id="GO:0051289">
    <property type="term" value="P:protein homotetramerization"/>
    <property type="evidence" value="ECO:0000314"/>
    <property type="project" value="UniProtKB"/>
</dbReference>
<dbReference type="GO" id="GO:0006566">
    <property type="term" value="P:threonine metabolic process"/>
    <property type="evidence" value="ECO:0000314"/>
    <property type="project" value="UniProtKB"/>
</dbReference>
<dbReference type="CDD" id="cd05281">
    <property type="entry name" value="TDH"/>
    <property type="match status" value="1"/>
</dbReference>
<dbReference type="FunFam" id="3.40.50.720:FF:000068">
    <property type="entry name" value="Sorbitol dehydrogenase"/>
    <property type="match status" value="1"/>
</dbReference>
<dbReference type="Gene3D" id="3.90.180.10">
    <property type="entry name" value="Medium-chain alcohol dehydrogenases, catalytic domain"/>
    <property type="match status" value="1"/>
</dbReference>
<dbReference type="Gene3D" id="3.40.50.720">
    <property type="entry name" value="NAD(P)-binding Rossmann-like Domain"/>
    <property type="match status" value="1"/>
</dbReference>
<dbReference type="HAMAP" id="MF_00627">
    <property type="entry name" value="Thr_dehydrog"/>
    <property type="match status" value="1"/>
</dbReference>
<dbReference type="InterPro" id="IPR013149">
    <property type="entry name" value="ADH-like_C"/>
</dbReference>
<dbReference type="InterPro" id="IPR013154">
    <property type="entry name" value="ADH-like_N"/>
</dbReference>
<dbReference type="InterPro" id="IPR002328">
    <property type="entry name" value="ADH_Zn_CS"/>
</dbReference>
<dbReference type="InterPro" id="IPR011032">
    <property type="entry name" value="GroES-like_sf"/>
</dbReference>
<dbReference type="InterPro" id="IPR004627">
    <property type="entry name" value="L-Threonine_3-DHase"/>
</dbReference>
<dbReference type="InterPro" id="IPR036291">
    <property type="entry name" value="NAD(P)-bd_dom_sf"/>
</dbReference>
<dbReference type="InterPro" id="IPR020843">
    <property type="entry name" value="PKS_ER"/>
</dbReference>
<dbReference type="InterPro" id="IPR050129">
    <property type="entry name" value="Zn_alcohol_dh"/>
</dbReference>
<dbReference type="NCBIfam" id="NF003808">
    <property type="entry name" value="PRK05396.1"/>
    <property type="match status" value="1"/>
</dbReference>
<dbReference type="NCBIfam" id="TIGR00692">
    <property type="entry name" value="tdh"/>
    <property type="match status" value="1"/>
</dbReference>
<dbReference type="PANTHER" id="PTHR43401">
    <property type="entry name" value="L-THREONINE 3-DEHYDROGENASE"/>
    <property type="match status" value="1"/>
</dbReference>
<dbReference type="PANTHER" id="PTHR43401:SF2">
    <property type="entry name" value="L-THREONINE 3-DEHYDROGENASE"/>
    <property type="match status" value="1"/>
</dbReference>
<dbReference type="Pfam" id="PF08240">
    <property type="entry name" value="ADH_N"/>
    <property type="match status" value="1"/>
</dbReference>
<dbReference type="Pfam" id="PF00107">
    <property type="entry name" value="ADH_zinc_N"/>
    <property type="match status" value="1"/>
</dbReference>
<dbReference type="SMART" id="SM00829">
    <property type="entry name" value="PKS_ER"/>
    <property type="match status" value="1"/>
</dbReference>
<dbReference type="SUPFAM" id="SSF50129">
    <property type="entry name" value="GroES-like"/>
    <property type="match status" value="1"/>
</dbReference>
<dbReference type="SUPFAM" id="SSF51735">
    <property type="entry name" value="NAD(P)-binding Rossmann-fold domains"/>
    <property type="match status" value="1"/>
</dbReference>
<dbReference type="PROSITE" id="PS00059">
    <property type="entry name" value="ADH_ZINC"/>
    <property type="match status" value="1"/>
</dbReference>
<name>TDH_PYRFU</name>
<organism>
    <name type="scientific">Pyrococcus furiosus (strain ATCC 43587 / DSM 3638 / JCM 8422 / Vc1)</name>
    <dbReference type="NCBI Taxonomy" id="186497"/>
    <lineage>
        <taxon>Archaea</taxon>
        <taxon>Methanobacteriati</taxon>
        <taxon>Methanobacteriota</taxon>
        <taxon>Thermococci</taxon>
        <taxon>Thermococcales</taxon>
        <taxon>Thermococcaceae</taxon>
        <taxon>Pyrococcus</taxon>
    </lineage>
</organism>
<keyword id="KW-0963">Cytoplasm</keyword>
<keyword id="KW-0479">Metal-binding</keyword>
<keyword id="KW-0520">NAD</keyword>
<keyword id="KW-0560">Oxidoreductase</keyword>
<keyword id="KW-1185">Reference proteome</keyword>
<keyword id="KW-0862">Zinc</keyword>
<proteinExistence type="evidence at protein level"/>
<feature type="chain" id="PRO_0000160876" description="L-threonine 3-dehydrogenase">
    <location>
        <begin position="1"/>
        <end position="348"/>
    </location>
</feature>
<feature type="active site" description="Charge relay system" evidence="1">
    <location>
        <position position="44"/>
    </location>
</feature>
<feature type="active site" description="Charge relay system" evidence="1">
    <location>
        <position position="47"/>
    </location>
</feature>
<feature type="binding site" evidence="1">
    <location>
        <position position="42"/>
    </location>
    <ligand>
        <name>Zn(2+)</name>
        <dbReference type="ChEBI" id="CHEBI:29105"/>
        <label>1</label>
        <note>catalytic</note>
    </ligand>
</feature>
<feature type="binding site" evidence="1">
    <location>
        <position position="67"/>
    </location>
    <ligand>
        <name>Zn(2+)</name>
        <dbReference type="ChEBI" id="CHEBI:29105"/>
        <label>1</label>
        <note>catalytic</note>
    </ligand>
</feature>
<feature type="binding site" evidence="1">
    <location>
        <position position="68"/>
    </location>
    <ligand>
        <name>Zn(2+)</name>
        <dbReference type="ChEBI" id="CHEBI:29105"/>
        <label>1</label>
        <note>catalytic</note>
    </ligand>
</feature>
<feature type="binding site" evidence="1">
    <location>
        <position position="97"/>
    </location>
    <ligand>
        <name>Zn(2+)</name>
        <dbReference type="ChEBI" id="CHEBI:29105"/>
        <label>2</label>
    </ligand>
</feature>
<feature type="binding site" evidence="1">
    <location>
        <position position="100"/>
    </location>
    <ligand>
        <name>Zn(2+)</name>
        <dbReference type="ChEBI" id="CHEBI:29105"/>
        <label>2</label>
    </ligand>
</feature>
<feature type="binding site" evidence="1">
    <location>
        <position position="103"/>
    </location>
    <ligand>
        <name>Zn(2+)</name>
        <dbReference type="ChEBI" id="CHEBI:29105"/>
        <label>2</label>
    </ligand>
</feature>
<feature type="binding site" evidence="1">
    <location>
        <position position="111"/>
    </location>
    <ligand>
        <name>Zn(2+)</name>
        <dbReference type="ChEBI" id="CHEBI:29105"/>
        <label>2</label>
    </ligand>
</feature>
<feature type="binding site" evidence="1">
    <location>
        <position position="179"/>
    </location>
    <ligand>
        <name>NAD(+)</name>
        <dbReference type="ChEBI" id="CHEBI:57540"/>
    </ligand>
</feature>
<feature type="binding site" evidence="1">
    <location>
        <position position="199"/>
    </location>
    <ligand>
        <name>NAD(+)</name>
        <dbReference type="ChEBI" id="CHEBI:57540"/>
    </ligand>
</feature>
<feature type="binding site" evidence="1">
    <location>
        <position position="204"/>
    </location>
    <ligand>
        <name>NAD(+)</name>
        <dbReference type="ChEBI" id="CHEBI:57540"/>
    </ligand>
</feature>
<feature type="binding site" evidence="1">
    <location>
        <begin position="266"/>
        <end position="268"/>
    </location>
    <ligand>
        <name>NAD(+)</name>
        <dbReference type="ChEBI" id="CHEBI:57540"/>
    </ligand>
</feature>
<feature type="binding site" evidence="1">
    <location>
        <begin position="291"/>
        <end position="292"/>
    </location>
    <ligand>
        <name>NAD(+)</name>
        <dbReference type="ChEBI" id="CHEBI:57540"/>
    </ligand>
</feature>
<feature type="site" description="Important for catalytic activity for the proton relay mechanism but does not participate directly in the coordination of zinc atom" evidence="1">
    <location>
        <position position="152"/>
    </location>
</feature>
<sequence>MSEKMVAIMKTKPEYGAELVEVDVPKPGPGEVLIKILATSICGTDLHIYEWNEWAQTRIRPPQIMGHEVAGEVVEVGPGVEGIEVGDYVSVETHIVCGKCYACKRGQYHVCQNTKIFGVDTDGVFAEYAVVPAQNVWKNPKNIPPEYATLQEPLGNAVDTVLAGPIAGKSVLITGAGPLGLLGIAVAKASGAYPVIVSEPSEFRRNLAKKVGADYVINPFEEDVVKEVMDITDGNGVDVFLEFSGAPKALEQGLQAVTPAGRVSLLGLFPGKVSIDFNNLIIFKALTVYGITGRHLWETWYTVSRLLQSGKLNIDPIITHKYKGFDKYEEAFELMRAGKTGKVVFMLK</sequence>
<gene>
    <name evidence="1 3" type="primary">tdh</name>
    <name type="ordered locus">PF0991</name>
</gene>